<proteinExistence type="inferred from homology"/>
<dbReference type="EC" id="3.5.3.4" evidence="1"/>
<dbReference type="EMBL" id="AP006618">
    <property type="protein sequence ID" value="BAD60089.1"/>
    <property type="molecule type" value="Genomic_DNA"/>
</dbReference>
<dbReference type="RefSeq" id="WP_011211771.1">
    <property type="nucleotide sequence ID" value="NC_006361.1"/>
</dbReference>
<dbReference type="SMR" id="Q5YP02"/>
<dbReference type="STRING" id="247156.NFA_52370"/>
<dbReference type="GeneID" id="61135814"/>
<dbReference type="KEGG" id="nfa:NFA_52370"/>
<dbReference type="eggNOG" id="COG4266">
    <property type="taxonomic scope" value="Bacteria"/>
</dbReference>
<dbReference type="HOGENOM" id="CLU_038797_1_0_11"/>
<dbReference type="OrthoDB" id="2078334at2"/>
<dbReference type="UniPathway" id="UPA00395">
    <property type="reaction ID" value="UER00654"/>
</dbReference>
<dbReference type="Proteomes" id="UP000006820">
    <property type="component" value="Chromosome"/>
</dbReference>
<dbReference type="GO" id="GO:0004037">
    <property type="term" value="F:allantoicase activity"/>
    <property type="evidence" value="ECO:0007669"/>
    <property type="project" value="UniProtKB-UniRule"/>
</dbReference>
<dbReference type="GO" id="GO:0000256">
    <property type="term" value="P:allantoin catabolic process"/>
    <property type="evidence" value="ECO:0007669"/>
    <property type="project" value="UniProtKB-UniRule"/>
</dbReference>
<dbReference type="GO" id="GO:0006144">
    <property type="term" value="P:purine nucleobase metabolic process"/>
    <property type="evidence" value="ECO:0007669"/>
    <property type="project" value="UniProtKB-KW"/>
</dbReference>
<dbReference type="Gene3D" id="2.60.120.260">
    <property type="entry name" value="Galactose-binding domain-like"/>
    <property type="match status" value="2"/>
</dbReference>
<dbReference type="HAMAP" id="MF_00813">
    <property type="entry name" value="Allantoicase"/>
    <property type="match status" value="1"/>
</dbReference>
<dbReference type="InterPro" id="IPR005164">
    <property type="entry name" value="Allantoicase"/>
</dbReference>
<dbReference type="InterPro" id="IPR015908">
    <property type="entry name" value="Allantoicase_dom"/>
</dbReference>
<dbReference type="InterPro" id="IPR008979">
    <property type="entry name" value="Galactose-bd-like_sf"/>
</dbReference>
<dbReference type="NCBIfam" id="TIGR02961">
    <property type="entry name" value="allantoicase"/>
    <property type="match status" value="1"/>
</dbReference>
<dbReference type="PANTHER" id="PTHR12045">
    <property type="entry name" value="ALLANTOICASE"/>
    <property type="match status" value="1"/>
</dbReference>
<dbReference type="PANTHER" id="PTHR12045:SF3">
    <property type="entry name" value="INACTIVE ALLANTOICASE-RELATED"/>
    <property type="match status" value="1"/>
</dbReference>
<dbReference type="Pfam" id="PF03561">
    <property type="entry name" value="Allantoicase"/>
    <property type="match status" value="2"/>
</dbReference>
<dbReference type="PIRSF" id="PIRSF016516">
    <property type="entry name" value="Allantoicase"/>
    <property type="match status" value="1"/>
</dbReference>
<dbReference type="SUPFAM" id="SSF49785">
    <property type="entry name" value="Galactose-binding domain-like"/>
    <property type="match status" value="2"/>
</dbReference>
<evidence type="ECO:0000255" key="1">
    <source>
        <dbReference type="HAMAP-Rule" id="MF_00813"/>
    </source>
</evidence>
<gene>
    <name evidence="1" type="primary">alc</name>
    <name type="ordered locus">NFA_52370</name>
</gene>
<name>ALLC_NOCFA</name>
<organism>
    <name type="scientific">Nocardia farcinica (strain IFM 10152)</name>
    <dbReference type="NCBI Taxonomy" id="247156"/>
    <lineage>
        <taxon>Bacteria</taxon>
        <taxon>Bacillati</taxon>
        <taxon>Actinomycetota</taxon>
        <taxon>Actinomycetes</taxon>
        <taxon>Mycobacteriales</taxon>
        <taxon>Nocardiaceae</taxon>
        <taxon>Nocardia</taxon>
    </lineage>
</organism>
<accession>Q5YP02</accession>
<feature type="chain" id="PRO_0000205921" description="Probable allantoicase">
    <location>
        <begin position="1"/>
        <end position="329"/>
    </location>
</feature>
<comment type="catalytic activity">
    <reaction evidence="1">
        <text>allantoate + H2O = (S)-ureidoglycolate + urea</text>
        <dbReference type="Rhea" id="RHEA:11016"/>
        <dbReference type="ChEBI" id="CHEBI:15377"/>
        <dbReference type="ChEBI" id="CHEBI:16199"/>
        <dbReference type="ChEBI" id="CHEBI:17536"/>
        <dbReference type="ChEBI" id="CHEBI:57296"/>
        <dbReference type="EC" id="3.5.3.4"/>
    </reaction>
</comment>
<comment type="pathway">
    <text evidence="1">Nitrogen metabolism; (S)-allantoin degradation; (S)-ureidoglycolate from allantoate (aminidohydrolase route): step 1/1.</text>
</comment>
<comment type="similarity">
    <text evidence="1">Belongs to the allantoicase family.</text>
</comment>
<sequence length="329" mass="35822">MNETAADRVAPRGFTELPDLAVRSLGGAVIWADDEFFAEKENLIVPEAPEFRPATYGHRGQVYDGWETRRHRGLPGDDAAVVRLGVPGVIHGVVVDTSWFTGNYPPAISLSALAIDGYPPAADIAARTDWVPLLDRVPVRGDARNPFPIPSRDRWTHVRLTMHPDGGIARLRVHGEGRPDPALLGLGPVDLAALENGALVLDCSDRFYGSPHQLLHPGNARRMGDGWETARRRDDGNDWVRIRLAGPGLIRLAELDTSYFLGNSPAAARLTGRTTDGTEVELLPRTPLQPDTRHRFPTAAVAASVEEVRLDIYPDGGLARVRLFGELGG</sequence>
<keyword id="KW-0378">Hydrolase</keyword>
<keyword id="KW-0659">Purine metabolism</keyword>
<keyword id="KW-1185">Reference proteome</keyword>
<reference key="1">
    <citation type="journal article" date="2004" name="Proc. Natl. Acad. Sci. U.S.A.">
        <title>The complete genomic sequence of Nocardia farcinica IFM 10152.</title>
        <authorList>
            <person name="Ishikawa J."/>
            <person name="Yamashita A."/>
            <person name="Mikami Y."/>
            <person name="Hoshino Y."/>
            <person name="Kurita H."/>
            <person name="Hotta K."/>
            <person name="Shiba T."/>
            <person name="Hattori M."/>
        </authorList>
    </citation>
    <scope>NUCLEOTIDE SEQUENCE [LARGE SCALE GENOMIC DNA]</scope>
    <source>
        <strain>IFM 10152</strain>
    </source>
</reference>
<protein>
    <recommendedName>
        <fullName evidence="1">Probable allantoicase</fullName>
        <ecNumber evidence="1">3.5.3.4</ecNumber>
    </recommendedName>
    <alternativeName>
        <fullName evidence="1">Allantoate amidinohydrolase</fullName>
    </alternativeName>
</protein>